<feature type="chain" id="PRO_1000005477" description="Large ribosomal subunit protein uL10">
    <location>
        <begin position="1"/>
        <end position="165"/>
    </location>
</feature>
<comment type="function">
    <text evidence="1">Forms part of the ribosomal stalk, playing a central role in the interaction of the ribosome with GTP-bound translation factors.</text>
</comment>
<comment type="subunit">
    <text evidence="1">Part of the ribosomal stalk of the 50S ribosomal subunit. The N-terminus interacts with L11 and the large rRNA to form the base of the stalk. The C-terminus forms an elongated spine to which L12 dimers bind in a sequential fashion forming a multimeric L10(L12)X complex.</text>
</comment>
<comment type="similarity">
    <text evidence="1">Belongs to the universal ribosomal protein uL10 family.</text>
</comment>
<evidence type="ECO:0000255" key="1">
    <source>
        <dbReference type="HAMAP-Rule" id="MF_00362"/>
    </source>
</evidence>
<evidence type="ECO:0000305" key="2"/>
<keyword id="KW-0687">Ribonucleoprotein</keyword>
<keyword id="KW-0689">Ribosomal protein</keyword>
<keyword id="KW-0694">RNA-binding</keyword>
<keyword id="KW-0699">rRNA-binding</keyword>
<gene>
    <name evidence="1" type="primary">rplJ</name>
    <name type="ordered locus">BMA10229_A1912</name>
</gene>
<proteinExistence type="inferred from homology"/>
<protein>
    <recommendedName>
        <fullName evidence="1">Large ribosomal subunit protein uL10</fullName>
    </recommendedName>
    <alternativeName>
        <fullName evidence="2">50S ribosomal protein L10</fullName>
    </alternativeName>
</protein>
<accession>A2S7G4</accession>
<organism>
    <name type="scientific">Burkholderia mallei (strain NCTC 10229)</name>
    <dbReference type="NCBI Taxonomy" id="412022"/>
    <lineage>
        <taxon>Bacteria</taxon>
        <taxon>Pseudomonadati</taxon>
        <taxon>Pseudomonadota</taxon>
        <taxon>Betaproteobacteria</taxon>
        <taxon>Burkholderiales</taxon>
        <taxon>Burkholderiaceae</taxon>
        <taxon>Burkholderia</taxon>
        <taxon>pseudomallei group</taxon>
    </lineage>
</organism>
<dbReference type="EMBL" id="CP000546">
    <property type="protein sequence ID" value="ABN02862.1"/>
    <property type="molecule type" value="Genomic_DNA"/>
</dbReference>
<dbReference type="RefSeq" id="WP_004199864.1">
    <property type="nucleotide sequence ID" value="NC_008836.1"/>
</dbReference>
<dbReference type="SMR" id="A2S7G4"/>
<dbReference type="GeneID" id="93061843"/>
<dbReference type="KEGG" id="bml:BMA10229_A1912"/>
<dbReference type="HOGENOM" id="CLU_092227_0_1_4"/>
<dbReference type="Proteomes" id="UP000002283">
    <property type="component" value="Chromosome I"/>
</dbReference>
<dbReference type="GO" id="GO:1990904">
    <property type="term" value="C:ribonucleoprotein complex"/>
    <property type="evidence" value="ECO:0007669"/>
    <property type="project" value="UniProtKB-KW"/>
</dbReference>
<dbReference type="GO" id="GO:0005840">
    <property type="term" value="C:ribosome"/>
    <property type="evidence" value="ECO:0007669"/>
    <property type="project" value="UniProtKB-KW"/>
</dbReference>
<dbReference type="GO" id="GO:0070180">
    <property type="term" value="F:large ribosomal subunit rRNA binding"/>
    <property type="evidence" value="ECO:0007669"/>
    <property type="project" value="UniProtKB-UniRule"/>
</dbReference>
<dbReference type="GO" id="GO:0006412">
    <property type="term" value="P:translation"/>
    <property type="evidence" value="ECO:0007669"/>
    <property type="project" value="UniProtKB-UniRule"/>
</dbReference>
<dbReference type="CDD" id="cd05797">
    <property type="entry name" value="Ribosomal_L10"/>
    <property type="match status" value="1"/>
</dbReference>
<dbReference type="Gene3D" id="3.30.70.1730">
    <property type="match status" value="1"/>
</dbReference>
<dbReference type="Gene3D" id="6.10.250.290">
    <property type="match status" value="1"/>
</dbReference>
<dbReference type="HAMAP" id="MF_00362">
    <property type="entry name" value="Ribosomal_uL10"/>
    <property type="match status" value="1"/>
</dbReference>
<dbReference type="InterPro" id="IPR001790">
    <property type="entry name" value="Ribosomal_uL10"/>
</dbReference>
<dbReference type="InterPro" id="IPR043141">
    <property type="entry name" value="Ribosomal_uL10-like_sf"/>
</dbReference>
<dbReference type="InterPro" id="IPR022973">
    <property type="entry name" value="Ribosomal_uL10_bac"/>
</dbReference>
<dbReference type="InterPro" id="IPR047865">
    <property type="entry name" value="Ribosomal_uL10_bac_type"/>
</dbReference>
<dbReference type="NCBIfam" id="NF000955">
    <property type="entry name" value="PRK00099.1-1"/>
    <property type="match status" value="1"/>
</dbReference>
<dbReference type="PANTHER" id="PTHR11560">
    <property type="entry name" value="39S RIBOSOMAL PROTEIN L10, MITOCHONDRIAL"/>
    <property type="match status" value="1"/>
</dbReference>
<dbReference type="Pfam" id="PF00466">
    <property type="entry name" value="Ribosomal_L10"/>
    <property type="match status" value="1"/>
</dbReference>
<dbReference type="SUPFAM" id="SSF160369">
    <property type="entry name" value="Ribosomal protein L10-like"/>
    <property type="match status" value="1"/>
</dbReference>
<reference key="1">
    <citation type="journal article" date="2010" name="Genome Biol. Evol.">
        <title>Continuing evolution of Burkholderia mallei through genome reduction and large-scale rearrangements.</title>
        <authorList>
            <person name="Losada L."/>
            <person name="Ronning C.M."/>
            <person name="DeShazer D."/>
            <person name="Woods D."/>
            <person name="Fedorova N."/>
            <person name="Kim H.S."/>
            <person name="Shabalina S.A."/>
            <person name="Pearson T.R."/>
            <person name="Brinkac L."/>
            <person name="Tan P."/>
            <person name="Nandi T."/>
            <person name="Crabtree J."/>
            <person name="Badger J."/>
            <person name="Beckstrom-Sternberg S."/>
            <person name="Saqib M."/>
            <person name="Schutzer S.E."/>
            <person name="Keim P."/>
            <person name="Nierman W.C."/>
        </authorList>
    </citation>
    <scope>NUCLEOTIDE SEQUENCE [LARGE SCALE GENOMIC DNA]</scope>
    <source>
        <strain>NCTC 10229</strain>
    </source>
</reference>
<sequence>MPLNREDKQAVVAEVAAQVAKAQTVVLAEYRGIAVGDLTTLRAKAREQKVYLRVLKNTLARRAVEGTPFAPLAEQMTGPLIYGISEDAIAAAKVVHDFSKSNDKLVIKAGSYDGKVMDKAGVQALASIPSREELLSKLLFVMQAPVSGFARALAALAEKKQAEAA</sequence>
<name>RL10_BURM9</name>